<keyword id="KW-0997">Cell inner membrane</keyword>
<keyword id="KW-1003">Cell membrane</keyword>
<keyword id="KW-0472">Membrane</keyword>
<keyword id="KW-0812">Transmembrane</keyword>
<keyword id="KW-1133">Transmembrane helix</keyword>
<keyword id="KW-0813">Transport</keyword>
<accession>P42205</accession>
<name>GUDP_PSEPU</name>
<gene>
    <name type="primary">gudP</name>
</gene>
<organism>
    <name type="scientific">Pseudomonas putida</name>
    <name type="common">Arthrobacter siderocapsulatus</name>
    <dbReference type="NCBI Taxonomy" id="303"/>
    <lineage>
        <taxon>Bacteria</taxon>
        <taxon>Pseudomonadati</taxon>
        <taxon>Pseudomonadota</taxon>
        <taxon>Gammaproteobacteria</taxon>
        <taxon>Pseudomonadales</taxon>
        <taxon>Pseudomonadaceae</taxon>
        <taxon>Pseudomonas</taxon>
    </lineage>
</organism>
<feature type="chain" id="PRO_0000121386" description="Probable galactarate/D-glucarate transporter GudP">
    <location>
        <begin position="1"/>
        <end position="456"/>
    </location>
</feature>
<feature type="transmembrane region" description="Helical" evidence="2">
    <location>
        <begin position="11"/>
        <end position="31"/>
    </location>
</feature>
<feature type="transmembrane region" description="Helical" evidence="2">
    <location>
        <begin position="51"/>
        <end position="71"/>
    </location>
</feature>
<feature type="transmembrane region" description="Helical" evidence="2">
    <location>
        <begin position="78"/>
        <end position="96"/>
    </location>
</feature>
<feature type="transmembrane region" description="Helical" evidence="2">
    <location>
        <begin position="102"/>
        <end position="119"/>
    </location>
</feature>
<feature type="transmembrane region" description="Helical" evidence="2">
    <location>
        <begin position="246"/>
        <end position="266"/>
    </location>
</feature>
<feature type="transmembrane region" description="Helical" evidence="2">
    <location>
        <begin position="280"/>
        <end position="300"/>
    </location>
</feature>
<feature type="transmembrane region" description="Helical" evidence="2">
    <location>
        <begin position="317"/>
        <end position="337"/>
    </location>
</feature>
<feature type="transmembrane region" description="Helical" evidence="2">
    <location>
        <begin position="341"/>
        <end position="361"/>
    </location>
</feature>
<feature type="transmembrane region" description="Helical" evidence="2">
    <location>
        <begin position="381"/>
        <end position="401"/>
    </location>
</feature>
<feature type="transmembrane region" description="Helical" evidence="2">
    <location>
        <begin position="408"/>
        <end position="428"/>
    </location>
</feature>
<proteinExistence type="inferred from homology"/>
<dbReference type="EMBL" id="M69160">
    <property type="protein sequence ID" value="AAA25867.1"/>
    <property type="molecule type" value="Genomic_DNA"/>
</dbReference>
<dbReference type="PIR" id="S27616">
    <property type="entry name" value="S27616"/>
</dbReference>
<dbReference type="SMR" id="P42205"/>
<dbReference type="GO" id="GO:0005886">
    <property type="term" value="C:plasma membrane"/>
    <property type="evidence" value="ECO:0007669"/>
    <property type="project" value="UniProtKB-SubCell"/>
</dbReference>
<dbReference type="GO" id="GO:0022857">
    <property type="term" value="F:transmembrane transporter activity"/>
    <property type="evidence" value="ECO:0007669"/>
    <property type="project" value="InterPro"/>
</dbReference>
<dbReference type="CDD" id="cd17319">
    <property type="entry name" value="MFS_ExuT_GudP_like"/>
    <property type="match status" value="1"/>
</dbReference>
<dbReference type="Gene3D" id="1.20.1250.20">
    <property type="entry name" value="MFS general substrate transporter like domains"/>
    <property type="match status" value="2"/>
</dbReference>
<dbReference type="InterPro" id="IPR011701">
    <property type="entry name" value="MFS"/>
</dbReference>
<dbReference type="InterPro" id="IPR020846">
    <property type="entry name" value="MFS_dom"/>
</dbReference>
<dbReference type="InterPro" id="IPR050382">
    <property type="entry name" value="MFS_Na/Anion_cotransporter"/>
</dbReference>
<dbReference type="InterPro" id="IPR036259">
    <property type="entry name" value="MFS_trans_sf"/>
</dbReference>
<dbReference type="InterPro" id="IPR000849">
    <property type="entry name" value="Sugar_P_transporter"/>
</dbReference>
<dbReference type="NCBIfam" id="TIGR00893">
    <property type="entry name" value="2A0114"/>
    <property type="match status" value="1"/>
</dbReference>
<dbReference type="PANTHER" id="PTHR11662:SF399">
    <property type="entry name" value="FI19708P1-RELATED"/>
    <property type="match status" value="1"/>
</dbReference>
<dbReference type="PANTHER" id="PTHR11662">
    <property type="entry name" value="SOLUTE CARRIER FAMILY 17"/>
    <property type="match status" value="1"/>
</dbReference>
<dbReference type="Pfam" id="PF07690">
    <property type="entry name" value="MFS_1"/>
    <property type="match status" value="1"/>
</dbReference>
<dbReference type="PIRSF" id="PIRSF002808">
    <property type="entry name" value="Hexose_phosphate_transp"/>
    <property type="match status" value="1"/>
</dbReference>
<dbReference type="SUPFAM" id="SSF103473">
    <property type="entry name" value="MFS general substrate transporter"/>
    <property type="match status" value="1"/>
</dbReference>
<dbReference type="PROSITE" id="PS50850">
    <property type="entry name" value="MFS"/>
    <property type="match status" value="1"/>
</dbReference>
<evidence type="ECO:0000250" key="1">
    <source>
        <dbReference type="UniProtKB" id="Q46916"/>
    </source>
</evidence>
<evidence type="ECO:0000255" key="2"/>
<evidence type="ECO:0000305" key="3"/>
<protein>
    <recommendedName>
        <fullName evidence="1">Probable galactarate/D-glucarate transporter GudP</fullName>
    </recommendedName>
</protein>
<sequence length="456" mass="49779">MQEPKQTRVRYLILLMLFLVTTINYADRATISIAGSSIQKDFGLDAVTLGYIFSAFGWAYVLGQIPGGWLLDRFGSKKVYAGSIFTWSLFTLLQGYIGEFGISTAVVLLFLLRFMVGLAEAPSFPGNARIVASWFPTKERGTASAIFNSAQYFATRAVRALDGLDRLHLRLAARVHRHGRPGHCVLAHLVDGDLRAERSPAGYAAEVRSSPHGGLVDLEDSKDKKDGGPKWDYIRQLLTNRMMMGIYLGQFCINALTYFFLTWFPVYLVQERGMTILKAGIIASLPAICGFLGGVLGGVISDTLLRRGNSLSVARKTPIVCGMVLSMSMIICNYVDADWMVVCFMALAFFGKAIGALGWAVVSDTSPKQIAGLSGGLFNTFGNLSSISTPIIIGYIIAATGVSKWRWSSWVPTHSFAAISYLFIVGEINRIELKGVTDEPATTAHPGELLPTTRKV</sequence>
<comment type="function">
    <text evidence="1">Probably involved in the uptake of galactarate and/or D-glucarate.</text>
</comment>
<comment type="catalytic activity">
    <reaction evidence="1">
        <text>galactarate(in) + H(+)(in) = galactarate(out) + H(+)(out)</text>
        <dbReference type="Rhea" id="RHEA:28478"/>
        <dbReference type="ChEBI" id="CHEBI:15378"/>
        <dbReference type="ChEBI" id="CHEBI:16537"/>
    </reaction>
</comment>
<comment type="catalytic activity">
    <reaction evidence="1">
        <text>D-glucarate(in) + H(+)(in) = D-glucarate(out) + H(+)(out)</text>
        <dbReference type="Rhea" id="RHEA:28474"/>
        <dbReference type="ChEBI" id="CHEBI:15378"/>
        <dbReference type="ChEBI" id="CHEBI:30612"/>
    </reaction>
</comment>
<comment type="subcellular location">
    <subcellularLocation>
        <location evidence="1">Cell inner membrane</location>
        <topology evidence="2">Multi-pass membrane protein</topology>
    </subcellularLocation>
</comment>
<comment type="similarity">
    <text evidence="3">Belongs to the major facilitator superfamily. Phthalate permease family.</text>
</comment>
<reference key="1">
    <citation type="submission" date="1992-06" db="EMBL/GenBank/DDBJ databases">
        <title>Nucleotide sequence of genes for glucarate dehydratase and 5-keto-4-deoxyglucarate dehydratase from Pseudomonas putida pp3.</title>
        <authorList>
            <person name="Burlingame R.P."/>
            <person name="Lauer G.D."/>
            <person name="Platz J.G."/>
            <person name="Rudd E.A."/>
            <person name="Ally A."/>
            <person name="Ally D."/>
            <person name="Backman K.C."/>
        </authorList>
    </citation>
    <scope>NUCLEOTIDE SEQUENCE [GENOMIC DNA]</scope>
    <source>
        <strain>pp3</strain>
    </source>
</reference>